<sequence length="334" mass="37320">MAFNLRNRNFLKLLDFSTKEIQFLLELSAELKKAKYAGTEQKKLQGKNIALIFEKSSTRTRCAFEVAAFDQGAQVSYIGPSGSQIGHKESMKDTARVLGRMYDGIEYRGFGQSIVEELGTYASVPVWNGLTDEFHPTQILADFLTMKEHGRGKQLHNMTFAYLGDARNNMGNSLMVGAAKMGMDIRLVAPKAFWPEEALVATCQEIAQQTGAKITLTENVEEGVKGCDFLYTDVWVSMGESAEAWDERVALMTPYQINMDVIKQTGNPHVKFMHCLPAFHNDETTVGKEVAEKYGMKGLEVTEEVFESEYSIVFDEAENRMHTIKAVMVATLGS</sequence>
<accession>A7MSD8</accession>
<organism>
    <name type="scientific">Vibrio campbellii (strain ATCC BAA-1116)</name>
    <dbReference type="NCBI Taxonomy" id="2902295"/>
    <lineage>
        <taxon>Bacteria</taxon>
        <taxon>Pseudomonadati</taxon>
        <taxon>Pseudomonadota</taxon>
        <taxon>Gammaproteobacteria</taxon>
        <taxon>Vibrionales</taxon>
        <taxon>Vibrionaceae</taxon>
        <taxon>Vibrio</taxon>
    </lineage>
</organism>
<comment type="function">
    <text evidence="1">Reversibly catalyzes the transfer of the carbamoyl group from carbamoyl phosphate (CP) to the N(epsilon) atom of ornithine (ORN) to produce L-citrulline.</text>
</comment>
<comment type="catalytic activity">
    <reaction evidence="2">
        <text>carbamoyl phosphate + L-ornithine = L-citrulline + phosphate + H(+)</text>
        <dbReference type="Rhea" id="RHEA:19513"/>
        <dbReference type="ChEBI" id="CHEBI:15378"/>
        <dbReference type="ChEBI" id="CHEBI:43474"/>
        <dbReference type="ChEBI" id="CHEBI:46911"/>
        <dbReference type="ChEBI" id="CHEBI:57743"/>
        <dbReference type="ChEBI" id="CHEBI:58228"/>
        <dbReference type="EC" id="2.1.3.3"/>
    </reaction>
</comment>
<comment type="pathway">
    <text evidence="2">Amino-acid biosynthesis; L-arginine biosynthesis; L-arginine from L-ornithine and carbamoyl phosphate: step 1/3.</text>
</comment>
<comment type="subcellular location">
    <subcellularLocation>
        <location evidence="2">Cytoplasm</location>
    </subcellularLocation>
</comment>
<comment type="similarity">
    <text evidence="2">Belongs to the aspartate/ornithine carbamoyltransferase superfamily. OTCase family.</text>
</comment>
<reference key="1">
    <citation type="submission" date="2007-08" db="EMBL/GenBank/DDBJ databases">
        <authorList>
            <consortium name="The Vibrio harveyi Genome Sequencing Project"/>
            <person name="Bassler B."/>
            <person name="Clifton S.W."/>
            <person name="Fulton L."/>
            <person name="Delehaunty K."/>
            <person name="Fronick C."/>
            <person name="Harrison M."/>
            <person name="Markivic C."/>
            <person name="Fulton R."/>
            <person name="Tin-Wollam A.-M."/>
            <person name="Shah N."/>
            <person name="Pepin K."/>
            <person name="Nash W."/>
            <person name="Thiruvilangam P."/>
            <person name="Bhonagiri V."/>
            <person name="Waters C."/>
            <person name="Tu K.C."/>
            <person name="Irgon J."/>
            <person name="Wilson R.K."/>
        </authorList>
    </citation>
    <scope>NUCLEOTIDE SEQUENCE [LARGE SCALE GENOMIC DNA]</scope>
    <source>
        <strain>ATCC BAA-1116 / BB120</strain>
    </source>
</reference>
<name>OTC_VIBC1</name>
<feature type="chain" id="PRO_1000073031" description="Ornithine carbamoyltransferase">
    <location>
        <begin position="1"/>
        <end position="334"/>
    </location>
</feature>
<feature type="binding site" evidence="2">
    <location>
        <begin position="57"/>
        <end position="60"/>
    </location>
    <ligand>
        <name>carbamoyl phosphate</name>
        <dbReference type="ChEBI" id="CHEBI:58228"/>
    </ligand>
</feature>
<feature type="binding site" evidence="2">
    <location>
        <position position="84"/>
    </location>
    <ligand>
        <name>carbamoyl phosphate</name>
        <dbReference type="ChEBI" id="CHEBI:58228"/>
    </ligand>
</feature>
<feature type="binding site" evidence="2">
    <location>
        <position position="108"/>
    </location>
    <ligand>
        <name>carbamoyl phosphate</name>
        <dbReference type="ChEBI" id="CHEBI:58228"/>
    </ligand>
</feature>
<feature type="binding site" evidence="2">
    <location>
        <begin position="135"/>
        <end position="138"/>
    </location>
    <ligand>
        <name>carbamoyl phosphate</name>
        <dbReference type="ChEBI" id="CHEBI:58228"/>
    </ligand>
</feature>
<feature type="binding site" evidence="2">
    <location>
        <position position="169"/>
    </location>
    <ligand>
        <name>L-ornithine</name>
        <dbReference type="ChEBI" id="CHEBI:46911"/>
    </ligand>
</feature>
<feature type="binding site" evidence="2">
    <location>
        <position position="233"/>
    </location>
    <ligand>
        <name>L-ornithine</name>
        <dbReference type="ChEBI" id="CHEBI:46911"/>
    </ligand>
</feature>
<feature type="binding site" evidence="2">
    <location>
        <begin position="237"/>
        <end position="238"/>
    </location>
    <ligand>
        <name>L-ornithine</name>
        <dbReference type="ChEBI" id="CHEBI:46911"/>
    </ligand>
</feature>
<feature type="binding site" evidence="2">
    <location>
        <begin position="275"/>
        <end position="276"/>
    </location>
    <ligand>
        <name>carbamoyl phosphate</name>
        <dbReference type="ChEBI" id="CHEBI:58228"/>
    </ligand>
</feature>
<feature type="binding site" evidence="2">
    <location>
        <position position="320"/>
    </location>
    <ligand>
        <name>carbamoyl phosphate</name>
        <dbReference type="ChEBI" id="CHEBI:58228"/>
    </ligand>
</feature>
<dbReference type="EC" id="2.1.3.3" evidence="2"/>
<dbReference type="EMBL" id="CP000789">
    <property type="protein sequence ID" value="ABU72559.1"/>
    <property type="molecule type" value="Genomic_DNA"/>
</dbReference>
<dbReference type="RefSeq" id="WP_012128971.1">
    <property type="nucleotide sequence ID" value="NC_009783.1"/>
</dbReference>
<dbReference type="SMR" id="A7MSD8"/>
<dbReference type="KEGG" id="vha:VIBHAR_03645"/>
<dbReference type="PATRIC" id="fig|338187.25.peg.2591"/>
<dbReference type="UniPathway" id="UPA00068">
    <property type="reaction ID" value="UER00112"/>
</dbReference>
<dbReference type="Proteomes" id="UP000008152">
    <property type="component" value="Chromosome I"/>
</dbReference>
<dbReference type="GO" id="GO:0005737">
    <property type="term" value="C:cytoplasm"/>
    <property type="evidence" value="ECO:0007669"/>
    <property type="project" value="UniProtKB-SubCell"/>
</dbReference>
<dbReference type="GO" id="GO:0016597">
    <property type="term" value="F:amino acid binding"/>
    <property type="evidence" value="ECO:0007669"/>
    <property type="project" value="InterPro"/>
</dbReference>
<dbReference type="GO" id="GO:0004585">
    <property type="term" value="F:ornithine carbamoyltransferase activity"/>
    <property type="evidence" value="ECO:0007669"/>
    <property type="project" value="UniProtKB-UniRule"/>
</dbReference>
<dbReference type="GO" id="GO:0042450">
    <property type="term" value="P:arginine biosynthetic process via ornithine"/>
    <property type="evidence" value="ECO:0007669"/>
    <property type="project" value="TreeGrafter"/>
</dbReference>
<dbReference type="GO" id="GO:0019240">
    <property type="term" value="P:citrulline biosynthetic process"/>
    <property type="evidence" value="ECO:0007669"/>
    <property type="project" value="TreeGrafter"/>
</dbReference>
<dbReference type="GO" id="GO:0006526">
    <property type="term" value="P:L-arginine biosynthetic process"/>
    <property type="evidence" value="ECO:0007669"/>
    <property type="project" value="UniProtKB-UniRule"/>
</dbReference>
<dbReference type="FunFam" id="3.40.50.1370:FF:000004">
    <property type="entry name" value="Ornithine carbamoyltransferase"/>
    <property type="match status" value="1"/>
</dbReference>
<dbReference type="Gene3D" id="3.40.50.1370">
    <property type="entry name" value="Aspartate/ornithine carbamoyltransferase"/>
    <property type="match status" value="2"/>
</dbReference>
<dbReference type="HAMAP" id="MF_01109">
    <property type="entry name" value="OTCase"/>
    <property type="match status" value="1"/>
</dbReference>
<dbReference type="InterPro" id="IPR006132">
    <property type="entry name" value="Asp/Orn_carbamoyltranf_P-bd"/>
</dbReference>
<dbReference type="InterPro" id="IPR006130">
    <property type="entry name" value="Asp/Orn_carbamoylTrfase"/>
</dbReference>
<dbReference type="InterPro" id="IPR036901">
    <property type="entry name" value="Asp/Orn_carbamoylTrfase_sf"/>
</dbReference>
<dbReference type="InterPro" id="IPR006131">
    <property type="entry name" value="Asp_carbamoyltransf_Asp/Orn-bd"/>
</dbReference>
<dbReference type="InterPro" id="IPR002292">
    <property type="entry name" value="Orn/put_carbamltrans"/>
</dbReference>
<dbReference type="InterPro" id="IPR024904">
    <property type="entry name" value="OTCase_ArgI"/>
</dbReference>
<dbReference type="NCBIfam" id="TIGR00658">
    <property type="entry name" value="orni_carb_tr"/>
    <property type="match status" value="1"/>
</dbReference>
<dbReference type="NCBIfam" id="NF002470">
    <property type="entry name" value="PRK01713.1"/>
    <property type="match status" value="1"/>
</dbReference>
<dbReference type="NCBIfam" id="NF003286">
    <property type="entry name" value="PRK04284.1"/>
    <property type="match status" value="1"/>
</dbReference>
<dbReference type="PANTHER" id="PTHR45753:SF2">
    <property type="entry name" value="ORNITHINE CARBAMOYLTRANSFERASE"/>
    <property type="match status" value="1"/>
</dbReference>
<dbReference type="PANTHER" id="PTHR45753">
    <property type="entry name" value="ORNITHINE CARBAMOYLTRANSFERASE, MITOCHONDRIAL"/>
    <property type="match status" value="1"/>
</dbReference>
<dbReference type="Pfam" id="PF00185">
    <property type="entry name" value="OTCace"/>
    <property type="match status" value="1"/>
</dbReference>
<dbReference type="Pfam" id="PF02729">
    <property type="entry name" value="OTCace_N"/>
    <property type="match status" value="1"/>
</dbReference>
<dbReference type="PRINTS" id="PR00100">
    <property type="entry name" value="AOTCASE"/>
</dbReference>
<dbReference type="PRINTS" id="PR00102">
    <property type="entry name" value="OTCASE"/>
</dbReference>
<dbReference type="SUPFAM" id="SSF53671">
    <property type="entry name" value="Aspartate/ornithine carbamoyltransferase"/>
    <property type="match status" value="1"/>
</dbReference>
<dbReference type="PROSITE" id="PS00097">
    <property type="entry name" value="CARBAMOYLTRANSFERASE"/>
    <property type="match status" value="1"/>
</dbReference>
<protein>
    <recommendedName>
        <fullName evidence="2">Ornithine carbamoyltransferase</fullName>
        <shortName evidence="2">OTCase</shortName>
        <ecNumber evidence="2">2.1.3.3</ecNumber>
    </recommendedName>
</protein>
<keyword id="KW-0028">Amino-acid biosynthesis</keyword>
<keyword id="KW-0055">Arginine biosynthesis</keyword>
<keyword id="KW-0963">Cytoplasm</keyword>
<keyword id="KW-0808">Transferase</keyword>
<proteinExistence type="inferred from homology"/>
<evidence type="ECO:0000250" key="1"/>
<evidence type="ECO:0000255" key="2">
    <source>
        <dbReference type="HAMAP-Rule" id="MF_01109"/>
    </source>
</evidence>
<gene>
    <name evidence="2" type="primary">argF</name>
    <name type="ordered locus">VIBHAR_03645</name>
</gene>